<protein>
    <recommendedName>
        <fullName evidence="1">Serine/threonine-protein kinase ATG1</fullName>
        <ecNumber evidence="1">2.7.11.1</ecNumber>
    </recommendedName>
    <alternativeName>
        <fullName evidence="1">Autophagy-related protein 1</fullName>
    </alternativeName>
</protein>
<proteinExistence type="inferred from homology"/>
<evidence type="ECO:0000250" key="1">
    <source>
        <dbReference type="UniProtKB" id="P53104"/>
    </source>
</evidence>
<evidence type="ECO:0000255" key="2">
    <source>
        <dbReference type="PROSITE-ProRule" id="PRU00159"/>
    </source>
</evidence>
<evidence type="ECO:0000255" key="3">
    <source>
        <dbReference type="PROSITE-ProRule" id="PRU10027"/>
    </source>
</evidence>
<evidence type="ECO:0000256" key="4">
    <source>
        <dbReference type="SAM" id="MobiDB-lite"/>
    </source>
</evidence>
<evidence type="ECO:0000303" key="5">
    <source>
    </source>
</evidence>
<accession>Q6BS08</accession>
<reference key="1">
    <citation type="journal article" date="2004" name="Nature">
        <title>Genome evolution in yeasts.</title>
        <authorList>
            <person name="Dujon B."/>
            <person name="Sherman D."/>
            <person name="Fischer G."/>
            <person name="Durrens P."/>
            <person name="Casaregola S."/>
            <person name="Lafontaine I."/>
            <person name="de Montigny J."/>
            <person name="Marck C."/>
            <person name="Neuveglise C."/>
            <person name="Talla E."/>
            <person name="Goffard N."/>
            <person name="Frangeul L."/>
            <person name="Aigle M."/>
            <person name="Anthouard V."/>
            <person name="Babour A."/>
            <person name="Barbe V."/>
            <person name="Barnay S."/>
            <person name="Blanchin S."/>
            <person name="Beckerich J.-M."/>
            <person name="Beyne E."/>
            <person name="Bleykasten C."/>
            <person name="Boisrame A."/>
            <person name="Boyer J."/>
            <person name="Cattolico L."/>
            <person name="Confanioleri F."/>
            <person name="de Daruvar A."/>
            <person name="Despons L."/>
            <person name="Fabre E."/>
            <person name="Fairhead C."/>
            <person name="Ferry-Dumazet H."/>
            <person name="Groppi A."/>
            <person name="Hantraye F."/>
            <person name="Hennequin C."/>
            <person name="Jauniaux N."/>
            <person name="Joyet P."/>
            <person name="Kachouri R."/>
            <person name="Kerrest A."/>
            <person name="Koszul R."/>
            <person name="Lemaire M."/>
            <person name="Lesur I."/>
            <person name="Ma L."/>
            <person name="Muller H."/>
            <person name="Nicaud J.-M."/>
            <person name="Nikolski M."/>
            <person name="Oztas S."/>
            <person name="Ozier-Kalogeropoulos O."/>
            <person name="Pellenz S."/>
            <person name="Potier S."/>
            <person name="Richard G.-F."/>
            <person name="Straub M.-L."/>
            <person name="Suleau A."/>
            <person name="Swennen D."/>
            <person name="Tekaia F."/>
            <person name="Wesolowski-Louvel M."/>
            <person name="Westhof E."/>
            <person name="Wirth B."/>
            <person name="Zeniou-Meyer M."/>
            <person name="Zivanovic Y."/>
            <person name="Bolotin-Fukuhara M."/>
            <person name="Thierry A."/>
            <person name="Bouchier C."/>
            <person name="Caudron B."/>
            <person name="Scarpelli C."/>
            <person name="Gaillardin C."/>
            <person name="Weissenbach J."/>
            <person name="Wincker P."/>
            <person name="Souciet J.-L."/>
        </authorList>
    </citation>
    <scope>NUCLEOTIDE SEQUENCE [LARGE SCALE GENOMIC DNA]</scope>
    <source>
        <strain>ATCC 36239 / CBS 767 / BCRC 21394 / JCM 1990 / NBRC 0083 / IGC 2968</strain>
    </source>
</reference>
<keyword id="KW-0067">ATP-binding</keyword>
<keyword id="KW-0072">Autophagy</keyword>
<keyword id="KW-0963">Cytoplasm</keyword>
<keyword id="KW-0418">Kinase</keyword>
<keyword id="KW-0472">Membrane</keyword>
<keyword id="KW-0547">Nucleotide-binding</keyword>
<keyword id="KW-0653">Protein transport</keyword>
<keyword id="KW-1185">Reference proteome</keyword>
<keyword id="KW-0723">Serine/threonine-protein kinase</keyword>
<keyword id="KW-0808">Transferase</keyword>
<keyword id="KW-0813">Transport</keyword>
<name>ATG1_DEBHA</name>
<dbReference type="EC" id="2.7.11.1" evidence="1"/>
<dbReference type="EMBL" id="CR382136">
    <property type="protein sequence ID" value="CAG87180.2"/>
    <property type="molecule type" value="Genomic_DNA"/>
</dbReference>
<dbReference type="RefSeq" id="XP_459012.2">
    <property type="nucleotide sequence ID" value="XM_459012.1"/>
</dbReference>
<dbReference type="SMR" id="Q6BS08"/>
<dbReference type="FunCoup" id="Q6BS08">
    <property type="interactions" value="118"/>
</dbReference>
<dbReference type="STRING" id="284592.Q6BS08"/>
<dbReference type="GeneID" id="2900978"/>
<dbReference type="KEGG" id="dha:DEHA2D12452g"/>
<dbReference type="eggNOG" id="KOG0595">
    <property type="taxonomic scope" value="Eukaryota"/>
</dbReference>
<dbReference type="HOGENOM" id="CLU_006447_1_0_1"/>
<dbReference type="InParanoid" id="Q6BS08"/>
<dbReference type="OMA" id="INNVVQW"/>
<dbReference type="OrthoDB" id="346907at2759"/>
<dbReference type="Proteomes" id="UP000000599">
    <property type="component" value="Chromosome D"/>
</dbReference>
<dbReference type="GO" id="GO:0005776">
    <property type="term" value="C:autophagosome"/>
    <property type="evidence" value="ECO:0007669"/>
    <property type="project" value="TreeGrafter"/>
</dbReference>
<dbReference type="GO" id="GO:0005829">
    <property type="term" value="C:cytosol"/>
    <property type="evidence" value="ECO:0007669"/>
    <property type="project" value="TreeGrafter"/>
</dbReference>
<dbReference type="GO" id="GO:0034045">
    <property type="term" value="C:phagophore assembly site membrane"/>
    <property type="evidence" value="ECO:0007669"/>
    <property type="project" value="UniProtKB-SubCell"/>
</dbReference>
<dbReference type="GO" id="GO:0005524">
    <property type="term" value="F:ATP binding"/>
    <property type="evidence" value="ECO:0007669"/>
    <property type="project" value="UniProtKB-KW"/>
</dbReference>
<dbReference type="GO" id="GO:0106310">
    <property type="term" value="F:protein serine kinase activity"/>
    <property type="evidence" value="ECO:0007669"/>
    <property type="project" value="RHEA"/>
</dbReference>
<dbReference type="GO" id="GO:0004674">
    <property type="term" value="F:protein serine/threonine kinase activity"/>
    <property type="evidence" value="ECO:0007669"/>
    <property type="project" value="UniProtKB-KW"/>
</dbReference>
<dbReference type="GO" id="GO:0000045">
    <property type="term" value="P:autophagosome assembly"/>
    <property type="evidence" value="ECO:0007669"/>
    <property type="project" value="TreeGrafter"/>
</dbReference>
<dbReference type="GO" id="GO:0000422">
    <property type="term" value="P:autophagy of mitochondrion"/>
    <property type="evidence" value="ECO:0007669"/>
    <property type="project" value="TreeGrafter"/>
</dbReference>
<dbReference type="GO" id="GO:0030447">
    <property type="term" value="P:filamentous growth"/>
    <property type="evidence" value="ECO:0007669"/>
    <property type="project" value="UniProtKB-ARBA"/>
</dbReference>
<dbReference type="GO" id="GO:0034727">
    <property type="term" value="P:piecemeal microautophagy of the nucleus"/>
    <property type="evidence" value="ECO:0007669"/>
    <property type="project" value="TreeGrafter"/>
</dbReference>
<dbReference type="GO" id="GO:0015031">
    <property type="term" value="P:protein transport"/>
    <property type="evidence" value="ECO:0007669"/>
    <property type="project" value="UniProtKB-KW"/>
</dbReference>
<dbReference type="GO" id="GO:0010506">
    <property type="term" value="P:regulation of autophagy"/>
    <property type="evidence" value="ECO:0007669"/>
    <property type="project" value="InterPro"/>
</dbReference>
<dbReference type="GO" id="GO:0042594">
    <property type="term" value="P:response to starvation"/>
    <property type="evidence" value="ECO:0007669"/>
    <property type="project" value="TreeGrafter"/>
</dbReference>
<dbReference type="GO" id="GO:0061709">
    <property type="term" value="P:reticulophagy"/>
    <property type="evidence" value="ECO:0007669"/>
    <property type="project" value="TreeGrafter"/>
</dbReference>
<dbReference type="CDD" id="cd14009">
    <property type="entry name" value="STKc_ATG1_ULK_like"/>
    <property type="match status" value="1"/>
</dbReference>
<dbReference type="FunFam" id="3.30.200.20:FF:000042">
    <property type="entry name" value="Aurora kinase A"/>
    <property type="match status" value="1"/>
</dbReference>
<dbReference type="FunFam" id="1.10.510.10:FF:000817">
    <property type="entry name" value="Serine/threonine-protein kinase ATG1"/>
    <property type="match status" value="1"/>
</dbReference>
<dbReference type="Gene3D" id="3.30.200.20">
    <property type="entry name" value="Phosphorylase Kinase, domain 1"/>
    <property type="match status" value="1"/>
</dbReference>
<dbReference type="Gene3D" id="1.10.510.10">
    <property type="entry name" value="Transferase(Phosphotransferase) domain 1"/>
    <property type="match status" value="1"/>
</dbReference>
<dbReference type="InterPro" id="IPR045269">
    <property type="entry name" value="Atg1-like"/>
</dbReference>
<dbReference type="InterPro" id="IPR048941">
    <property type="entry name" value="ATG1-like_MIT2"/>
</dbReference>
<dbReference type="InterPro" id="IPR022708">
    <property type="entry name" value="Atg1-like_tMIT"/>
</dbReference>
<dbReference type="InterPro" id="IPR011009">
    <property type="entry name" value="Kinase-like_dom_sf"/>
</dbReference>
<dbReference type="InterPro" id="IPR000719">
    <property type="entry name" value="Prot_kinase_dom"/>
</dbReference>
<dbReference type="InterPro" id="IPR017441">
    <property type="entry name" value="Protein_kinase_ATP_BS"/>
</dbReference>
<dbReference type="InterPro" id="IPR008271">
    <property type="entry name" value="Ser/Thr_kinase_AS"/>
</dbReference>
<dbReference type="PANTHER" id="PTHR24348:SF22">
    <property type="entry name" value="NON-SPECIFIC SERINE_THREONINE PROTEIN KINASE"/>
    <property type="match status" value="1"/>
</dbReference>
<dbReference type="PANTHER" id="PTHR24348">
    <property type="entry name" value="SERINE/THREONINE-PROTEIN KINASE UNC-51-RELATED"/>
    <property type="match status" value="1"/>
</dbReference>
<dbReference type="Pfam" id="PF12063">
    <property type="entry name" value="ATG1-like_MIT1"/>
    <property type="match status" value="1"/>
</dbReference>
<dbReference type="Pfam" id="PF21127">
    <property type="entry name" value="ATG1-like_MIT2"/>
    <property type="match status" value="1"/>
</dbReference>
<dbReference type="Pfam" id="PF00069">
    <property type="entry name" value="Pkinase"/>
    <property type="match status" value="1"/>
</dbReference>
<dbReference type="SMART" id="SM00220">
    <property type="entry name" value="S_TKc"/>
    <property type="match status" value="1"/>
</dbReference>
<dbReference type="SUPFAM" id="SSF56112">
    <property type="entry name" value="Protein kinase-like (PK-like)"/>
    <property type="match status" value="1"/>
</dbReference>
<dbReference type="PROSITE" id="PS00107">
    <property type="entry name" value="PROTEIN_KINASE_ATP"/>
    <property type="match status" value="1"/>
</dbReference>
<dbReference type="PROSITE" id="PS50011">
    <property type="entry name" value="PROTEIN_KINASE_DOM"/>
    <property type="match status" value="1"/>
</dbReference>
<dbReference type="PROSITE" id="PS00108">
    <property type="entry name" value="PROTEIN_KINASE_ST"/>
    <property type="match status" value="1"/>
</dbReference>
<gene>
    <name evidence="1" type="primary">ATG1</name>
    <name evidence="5" type="ordered locus">DEHA2D12452g</name>
</gene>
<organism>
    <name type="scientific">Debaryomyces hansenii (strain ATCC 36239 / CBS 767 / BCRC 21394 / JCM 1990 / NBRC 0083 / IGC 2968)</name>
    <name type="common">Yeast</name>
    <name type="synonym">Torulaspora hansenii</name>
    <dbReference type="NCBI Taxonomy" id="284592"/>
    <lineage>
        <taxon>Eukaryota</taxon>
        <taxon>Fungi</taxon>
        <taxon>Dikarya</taxon>
        <taxon>Ascomycota</taxon>
        <taxon>Saccharomycotina</taxon>
        <taxon>Pichiomycetes</taxon>
        <taxon>Debaryomycetaceae</taxon>
        <taxon>Debaryomyces</taxon>
    </lineage>
</organism>
<comment type="function">
    <text evidence="1">Serine/threonine protein kinase involved in the cytoplasm to vacuole transport (Cvt) and found to be essential in autophagy, where it is required for the formation of autophagosomes. Involved in the clearance of protein aggregates which cannot be efficiently cleared by the proteasome. Required for selective autophagic degradation of the nucleus (nucleophagy) as well as for mitophagy which contributes to regulate mitochondrial quantity and quality by eliminating the mitochondria to a basal level to fulfill cellular energy requirements and preventing excess ROS production. Also involved in endoplasmic reticulum-specific autophagic process, in selective removal of ER-associated degradation (ERAD) substrates. Plays a key role in ATG9 and ATG23 cycling through the pre-autophagosomal structure and is necessary to promote ATG18 binding to ATG9 through phosphorylation of ATG9. Catalyzes phosphorylation of ATG4, decreasing the interaction between ATG4 and ATG8 and impairing deconjugation of PE-conjugated forms of ATG8.</text>
</comment>
<comment type="catalytic activity">
    <reaction evidence="1">
        <text>L-seryl-[protein] + ATP = O-phospho-L-seryl-[protein] + ADP + H(+)</text>
        <dbReference type="Rhea" id="RHEA:17989"/>
        <dbReference type="Rhea" id="RHEA-COMP:9863"/>
        <dbReference type="Rhea" id="RHEA-COMP:11604"/>
        <dbReference type="ChEBI" id="CHEBI:15378"/>
        <dbReference type="ChEBI" id="CHEBI:29999"/>
        <dbReference type="ChEBI" id="CHEBI:30616"/>
        <dbReference type="ChEBI" id="CHEBI:83421"/>
        <dbReference type="ChEBI" id="CHEBI:456216"/>
        <dbReference type="EC" id="2.7.11.1"/>
    </reaction>
</comment>
<comment type="catalytic activity">
    <reaction evidence="1">
        <text>L-threonyl-[protein] + ATP = O-phospho-L-threonyl-[protein] + ADP + H(+)</text>
        <dbReference type="Rhea" id="RHEA:46608"/>
        <dbReference type="Rhea" id="RHEA-COMP:11060"/>
        <dbReference type="Rhea" id="RHEA-COMP:11605"/>
        <dbReference type="ChEBI" id="CHEBI:15378"/>
        <dbReference type="ChEBI" id="CHEBI:30013"/>
        <dbReference type="ChEBI" id="CHEBI:30616"/>
        <dbReference type="ChEBI" id="CHEBI:61977"/>
        <dbReference type="ChEBI" id="CHEBI:456216"/>
        <dbReference type="EC" id="2.7.11.1"/>
    </reaction>
</comment>
<comment type="subunit">
    <text evidence="1">Homodimer. Forms a ternary complex with ATG13 and ATG17.</text>
</comment>
<comment type="subcellular location">
    <subcellularLocation>
        <location evidence="1">Cytoplasm</location>
    </subcellularLocation>
    <subcellularLocation>
        <location evidence="1">Preautophagosomal structure membrane</location>
        <topology evidence="1">Peripheral membrane protein</topology>
    </subcellularLocation>
</comment>
<comment type="similarity">
    <text evidence="2">Belongs to the protein kinase superfamily. Ser/Thr protein kinase family. APG1/unc-51/ULK1 subfamily.</text>
</comment>
<sequence length="875" mass="97889">MSTTSIESNNDIGRSVKTIGVYSIGPEIGKGSFATVYKCFNTKTNESVAIKSVVRSKLKSKKLVENLEIEISILKTMKHPHIVGLLDYKQTTSHFHLVMDYCSMGDLSYFIRKRNQLIKTHPVISSLLERYPSPEGSHGLNEVLVIHFLKQLVSALEFLRNKSLVHRDIKPQNLLLCPPLHSKQEFKDGGFVGLWELPLLKIADFGFARFLPSTSMAETLCGSPLYMAPEILRYEKYNAKADLWSVGAVLYEMTVGKPPFRADNHVQLLKNIEKSNDRIKFPSAAQVPESLKRLIRSLLKYNPTERVSFNEFFNDPLIVNDLEGNDEPLETSEMDENLFISEYISPIKSSQKSQYIEPITTEVAVKEKSKQDLPAREVSTHASESQTKAVDTRPSSRDEEIKEIINKNSPGPETSRSIQPHNLKEKSLVLKNKDNDIILERDYVVVEKRAVEVNAIADELAHAGSGAVAINPRRTSSGSDNSYNGPNNMQLYRRPSLRSNSSGSQRRPSFTDRRISISISPTNALTKAIGLASNRLFGVNASGSPTNRLIEETDERLAINENNSSMNATNNTFSTILSNPNFANNLLIQKLNLPTSATVANNSQTNTSPQLSPQSKTDESVLNRLESLATKAHAINLFADVKFSQLIPSPPSSDALDDDLLHQNDMLPPKIVKSISEEGVVLYVKTLSLLAKGMVIASDWWYSQFEIDDPSNKNSNENPLKQSSNNNSDDLSLAVRINELVQWIREKFNECLEKAEFIRLTLQEANTLLSNEDSSEYMGNSNSVADKTRVVAEKLIFDRALEMSRNAAVNELVKEDLKGCELAYSTAIWMLEALLDEDSSNDEDRLDDEDKAMVEKFIVSIGNRLSVLKRKLEVV</sequence>
<feature type="chain" id="PRO_0000085645" description="Serine/threonine-protein kinase ATG1">
    <location>
        <begin position="1"/>
        <end position="875"/>
    </location>
</feature>
<feature type="domain" description="Protein kinase" evidence="2">
    <location>
        <begin position="22"/>
        <end position="318"/>
    </location>
</feature>
<feature type="region of interest" description="Disordered" evidence="4">
    <location>
        <begin position="367"/>
        <end position="422"/>
    </location>
</feature>
<feature type="region of interest" description="Disordered" evidence="4">
    <location>
        <begin position="470"/>
        <end position="515"/>
    </location>
</feature>
<feature type="compositionally biased region" description="Basic and acidic residues" evidence="4">
    <location>
        <begin position="367"/>
        <end position="379"/>
    </location>
</feature>
<feature type="compositionally biased region" description="Polar residues" evidence="4">
    <location>
        <begin position="380"/>
        <end position="389"/>
    </location>
</feature>
<feature type="compositionally biased region" description="Basic and acidic residues" evidence="4">
    <location>
        <begin position="390"/>
        <end position="405"/>
    </location>
</feature>
<feature type="compositionally biased region" description="Polar residues" evidence="4">
    <location>
        <begin position="406"/>
        <end position="420"/>
    </location>
</feature>
<feature type="compositionally biased region" description="Polar residues" evidence="4">
    <location>
        <begin position="473"/>
        <end position="490"/>
    </location>
</feature>
<feature type="compositionally biased region" description="Polar residues" evidence="4">
    <location>
        <begin position="497"/>
        <end position="508"/>
    </location>
</feature>
<feature type="active site" description="Proton acceptor" evidence="2 3">
    <location>
        <position position="168"/>
    </location>
</feature>
<feature type="binding site" evidence="2">
    <location>
        <begin position="28"/>
        <end position="36"/>
    </location>
    <ligand>
        <name>ATP</name>
        <dbReference type="ChEBI" id="CHEBI:30616"/>
    </ligand>
</feature>
<feature type="binding site" evidence="2">
    <location>
        <position position="51"/>
    </location>
    <ligand>
        <name>ATP</name>
        <dbReference type="ChEBI" id="CHEBI:30616"/>
    </ligand>
</feature>